<dbReference type="EC" id="3.4.19.12" evidence="2"/>
<dbReference type="EMBL" id="Z81039">
    <property type="protein sequence ID" value="CAB02772.1"/>
    <property type="molecule type" value="Genomic_DNA"/>
</dbReference>
<dbReference type="PIR" id="T19448">
    <property type="entry name" value="T19448"/>
</dbReference>
<dbReference type="RefSeq" id="NP_001369991.1">
    <property type="nucleotide sequence ID" value="NM_001383461.2"/>
</dbReference>
<dbReference type="RefSeq" id="NP_506709.1">
    <property type="nucleotide sequence ID" value="NM_074308.4"/>
</dbReference>
<dbReference type="PDB" id="4DHI">
    <property type="method" value="X-ray"/>
    <property type="resolution" value="1.80 A"/>
    <property type="chains" value="B=1-284"/>
</dbReference>
<dbReference type="PDB" id="4DHJ">
    <property type="method" value="X-ray"/>
    <property type="resolution" value="2.35 A"/>
    <property type="chains" value="A/E/I/L=1-284"/>
</dbReference>
<dbReference type="PDB" id="4DHZ">
    <property type="method" value="X-ray"/>
    <property type="resolution" value="3.11 A"/>
    <property type="chains" value="A=42-284"/>
</dbReference>
<dbReference type="PDB" id="4LDT">
    <property type="method" value="X-ray"/>
    <property type="resolution" value="1.90 A"/>
    <property type="chains" value="A=42-284"/>
</dbReference>
<dbReference type="PDBsum" id="4DHI"/>
<dbReference type="PDBsum" id="4DHJ"/>
<dbReference type="PDBsum" id="4DHZ"/>
<dbReference type="PDBsum" id="4LDT"/>
<dbReference type="SMR" id="Q9XVR6"/>
<dbReference type="BioGRID" id="533138">
    <property type="interactions" value="3"/>
</dbReference>
<dbReference type="DIP" id="DIP-26135N"/>
<dbReference type="FunCoup" id="Q9XVR6">
    <property type="interactions" value="2670"/>
</dbReference>
<dbReference type="IntAct" id="Q9XVR6">
    <property type="interactions" value="3"/>
</dbReference>
<dbReference type="STRING" id="6239.C25D7.8.2"/>
<dbReference type="MEROPS" id="C65.A01"/>
<dbReference type="PaxDb" id="6239-C25D7.8"/>
<dbReference type="PeptideAtlas" id="Q9XVR6"/>
<dbReference type="EnsemblMetazoa" id="C25D7.8.1">
    <property type="protein sequence ID" value="C25D7.8.1"/>
    <property type="gene ID" value="WBGene00007718"/>
</dbReference>
<dbReference type="GeneID" id="3565820"/>
<dbReference type="UCSC" id="C25D7.8">
    <property type="organism name" value="c. elegans"/>
</dbReference>
<dbReference type="AGR" id="WB:WBGene00007718"/>
<dbReference type="WormBase" id="C25D7.8">
    <property type="protein sequence ID" value="CE08394"/>
    <property type="gene ID" value="WBGene00007718"/>
    <property type="gene designation" value="otub-1"/>
</dbReference>
<dbReference type="eggNOG" id="KOG3991">
    <property type="taxonomic scope" value="Eukaryota"/>
</dbReference>
<dbReference type="GeneTree" id="ENSGT00390000006979"/>
<dbReference type="HOGENOM" id="CLU_014832_3_0_1"/>
<dbReference type="InParanoid" id="Q9XVR6"/>
<dbReference type="OMA" id="HIHIMAL"/>
<dbReference type="OrthoDB" id="18915at2759"/>
<dbReference type="PhylomeDB" id="Q9XVR6"/>
<dbReference type="Reactome" id="R-CEL-5689896">
    <property type="pathway name" value="Ovarian tumor domain proteases"/>
</dbReference>
<dbReference type="SignaLink" id="Q9XVR6"/>
<dbReference type="EvolutionaryTrace" id="Q9XVR6"/>
<dbReference type="PRO" id="PR:Q9XVR6"/>
<dbReference type="Proteomes" id="UP000001940">
    <property type="component" value="Chromosome V"/>
</dbReference>
<dbReference type="Bgee" id="WBGene00007718">
    <property type="expression patterns" value="Expressed in germ line (C elegans) and 4 other cell types or tissues"/>
</dbReference>
<dbReference type="GO" id="GO:0005886">
    <property type="term" value="C:plasma membrane"/>
    <property type="evidence" value="ECO:0007005"/>
    <property type="project" value="WormBase"/>
</dbReference>
<dbReference type="GO" id="GO:0004843">
    <property type="term" value="F:cysteine-type deubiquitinase activity"/>
    <property type="evidence" value="ECO:0000314"/>
    <property type="project" value="WormBase"/>
</dbReference>
<dbReference type="GO" id="GO:0043130">
    <property type="term" value="F:ubiquitin binding"/>
    <property type="evidence" value="ECO:0000318"/>
    <property type="project" value="GO_Central"/>
</dbReference>
<dbReference type="GO" id="GO:0016579">
    <property type="term" value="P:protein deubiquitination"/>
    <property type="evidence" value="ECO:0007669"/>
    <property type="project" value="InterPro"/>
</dbReference>
<dbReference type="GO" id="GO:0006508">
    <property type="term" value="P:proteolysis"/>
    <property type="evidence" value="ECO:0007669"/>
    <property type="project" value="UniProtKB-KW"/>
</dbReference>
<dbReference type="CDD" id="cd22749">
    <property type="entry name" value="Otubain_C65"/>
    <property type="match status" value="1"/>
</dbReference>
<dbReference type="FunFam" id="1.20.1300.20:FF:000005">
    <property type="entry name" value="Ubiquitin thioesterase otubain-like"/>
    <property type="match status" value="1"/>
</dbReference>
<dbReference type="Gene3D" id="3.30.200.60">
    <property type="entry name" value="Peptidase C65 Otubain, subdomain 1"/>
    <property type="match status" value="1"/>
</dbReference>
<dbReference type="Gene3D" id="1.20.1300.20">
    <property type="entry name" value="Peptidase C65 Otubain, subdomain 2"/>
    <property type="match status" value="1"/>
</dbReference>
<dbReference type="InterPro" id="IPR003323">
    <property type="entry name" value="OTU_dom"/>
</dbReference>
<dbReference type="InterPro" id="IPR016615">
    <property type="entry name" value="Otubain"/>
</dbReference>
<dbReference type="InterPro" id="IPR038765">
    <property type="entry name" value="Papain-like_cys_pep_sf"/>
</dbReference>
<dbReference type="InterPro" id="IPR019400">
    <property type="entry name" value="Peptidase_C65_otubain"/>
</dbReference>
<dbReference type="InterPro" id="IPR042468">
    <property type="entry name" value="Peptidase_C65_otubain_sub1"/>
</dbReference>
<dbReference type="InterPro" id="IPR042467">
    <property type="entry name" value="Peptidase_C65_otubain_sub2"/>
</dbReference>
<dbReference type="PANTHER" id="PTHR12931:SF15">
    <property type="entry name" value="UBIQUITIN THIOESTERASE OTUBAIN-LIKE"/>
    <property type="match status" value="1"/>
</dbReference>
<dbReference type="PANTHER" id="PTHR12931">
    <property type="entry name" value="UBIQUITIN THIOLESTERASE PROTEIN OTUB"/>
    <property type="match status" value="1"/>
</dbReference>
<dbReference type="Pfam" id="PF10275">
    <property type="entry name" value="Peptidase_C65"/>
    <property type="match status" value="1"/>
</dbReference>
<dbReference type="PIRSF" id="PIRSF013503">
    <property type="entry name" value="Ubiquitin_thioesterase_Otubain"/>
    <property type="match status" value="1"/>
</dbReference>
<dbReference type="SUPFAM" id="SSF54001">
    <property type="entry name" value="Cysteine proteinases"/>
    <property type="match status" value="1"/>
</dbReference>
<dbReference type="PROSITE" id="PS50802">
    <property type="entry name" value="OTU"/>
    <property type="match status" value="1"/>
</dbReference>
<gene>
    <name type="primary">otub-1</name>
    <name type="ORF">C25D7.8</name>
</gene>
<feature type="chain" id="PRO_0000221013" description="Ubiquitin thioesterase otubain-like">
    <location>
        <begin position="1"/>
        <end position="284"/>
    </location>
</feature>
<feature type="domain" description="OTU" evidence="4">
    <location>
        <begin position="77"/>
        <end position="274"/>
    </location>
</feature>
<feature type="active site" evidence="2">
    <location>
        <position position="85"/>
    </location>
</feature>
<feature type="active site" description="Nucleophile" evidence="2">
    <location>
        <position position="88"/>
    </location>
</feature>
<feature type="active site" evidence="3">
    <location>
        <position position="245"/>
    </location>
</feature>
<feature type="active site" evidence="2">
    <location>
        <position position="267"/>
    </location>
</feature>
<feature type="binding site" evidence="1">
    <location>
        <position position="176"/>
    </location>
    <ligand>
        <name>substrate</name>
    </ligand>
</feature>
<feature type="helix" evidence="8">
    <location>
        <begin position="30"/>
        <end position="37"/>
    </location>
</feature>
<feature type="helix" evidence="8">
    <location>
        <begin position="38"/>
        <end position="40"/>
    </location>
</feature>
<feature type="helix" evidence="7">
    <location>
        <begin position="50"/>
        <end position="55"/>
    </location>
</feature>
<feature type="turn" evidence="10">
    <location>
        <begin position="59"/>
        <end position="61"/>
    </location>
</feature>
<feature type="helix" evidence="7">
    <location>
        <begin position="63"/>
        <end position="73"/>
    </location>
</feature>
<feature type="strand" evidence="7">
    <location>
        <begin position="76"/>
        <end position="80"/>
    </location>
</feature>
<feature type="helix" evidence="7">
    <location>
        <begin position="88"/>
        <end position="103"/>
    </location>
</feature>
<feature type="helix" evidence="7">
    <location>
        <begin position="105"/>
        <end position="124"/>
    </location>
</feature>
<feature type="helix" evidence="7">
    <location>
        <begin position="129"/>
        <end position="147"/>
    </location>
</feature>
<feature type="strand" evidence="9">
    <location>
        <begin position="149"/>
        <end position="151"/>
    </location>
</feature>
<feature type="helix" evidence="7">
    <location>
        <begin position="153"/>
        <end position="161"/>
    </location>
</feature>
<feature type="helix" evidence="7">
    <location>
        <begin position="163"/>
        <end position="183"/>
    </location>
</feature>
<feature type="helix" evidence="7">
    <location>
        <begin position="185"/>
        <end position="188"/>
    </location>
</feature>
<feature type="helix" evidence="7">
    <location>
        <begin position="189"/>
        <end position="191"/>
    </location>
</feature>
<feature type="helix" evidence="7">
    <location>
        <begin position="198"/>
        <end position="205"/>
    </location>
</feature>
<feature type="helix" evidence="7">
    <location>
        <begin position="215"/>
        <end position="224"/>
    </location>
</feature>
<feature type="strand" evidence="7">
    <location>
        <begin position="229"/>
        <end position="235"/>
    </location>
</feature>
<feature type="helix" evidence="7">
    <location>
        <begin position="236"/>
        <end position="238"/>
    </location>
</feature>
<feature type="strand" evidence="7">
    <location>
        <begin position="242"/>
        <end position="249"/>
    </location>
</feature>
<feature type="strand" evidence="7">
    <location>
        <begin position="258"/>
        <end position="264"/>
    </location>
</feature>
<feature type="strand" evidence="7">
    <location>
        <begin position="267"/>
        <end position="273"/>
    </location>
</feature>
<sequence length="284" mass="32293">MANEPQKSDDNGQAAEAVVTDDEIVLQDQQLKTIEDEQKSVPLVATLAPFSILCAEYDNETSAAFLSKATELSEVYGEIRYIRGDGNCFYRAILVGLIEIMLKDRARLEKFIASSRDWTRTLVELGFPDWTCTDFCDFFIEFLEKIHSGVHTEEAVYTILNDDGSANYILMFFRLITSAFLKQNSEEYAPFIDEGMTVAQYCEQEIEPMWKDADHLAINSLIKAAGTRVRIEYMDRTAAPNGGWHYDIPSDDQQIAPEITLLYRPGHYDVIYKKDSTEASEIEN</sequence>
<reference key="1">
    <citation type="journal article" date="1998" name="Science">
        <title>Genome sequence of the nematode C. elegans: a platform for investigating biology.</title>
        <authorList>
            <consortium name="The C. elegans sequencing consortium"/>
        </authorList>
    </citation>
    <scope>NUCLEOTIDE SEQUENCE [LARGE SCALE GENOMIC DNA]</scope>
    <source>
        <strain>Bristol N2</strain>
    </source>
</reference>
<reference key="2">
    <citation type="journal article" date="2009" name="J. Mol. Biol.">
        <title>Evidence for bidentate substrate binding as the basis for the K48 linkage specificity of otubain 1.</title>
        <authorList>
            <person name="Wang T."/>
            <person name="Yin L."/>
            <person name="Cooper E.M."/>
            <person name="Lai M.-Y."/>
            <person name="Dickey S."/>
            <person name="Pickart C.M."/>
            <person name="Fushman D."/>
            <person name="Wilkinson K.D."/>
            <person name="Cohen R.E."/>
            <person name="Wolberger C."/>
        </authorList>
    </citation>
    <scope>FUNCTION</scope>
</reference>
<comment type="function">
    <text evidence="5">Hydrolase that can remove conjugated ubiquitin from proteins and plays an important regulatory role at the level of protein turnover by preventing degradation. Specifically cleaves 'Lys-48'-linked polyubiquitin.</text>
</comment>
<comment type="catalytic activity">
    <reaction evidence="2">
        <text>Thiol-dependent hydrolysis of ester, thioester, amide, peptide and isopeptide bonds formed by the C-terminal Gly of ubiquitin (a 76-residue protein attached to proteins as an intracellular targeting signal).</text>
        <dbReference type="EC" id="3.4.19.12"/>
    </reaction>
</comment>
<comment type="interaction">
    <interactant intactId="EBI-316044">
        <id>Q9XVR6</id>
    </interactant>
    <interactant intactId="EBI-1052908">
        <id>P61088</id>
        <label>UBE2N</label>
    </interactant>
    <organismsDiffer>true</organismsDiffer>
    <experiments>2</experiments>
</comment>
<comment type="similarity">
    <text evidence="6">Belongs to the peptidase C65 family.</text>
</comment>
<protein>
    <recommendedName>
        <fullName>Ubiquitin thioesterase otubain-like</fullName>
        <ecNumber evidence="2">3.4.19.12</ecNumber>
    </recommendedName>
    <alternativeName>
        <fullName>Deubiquitinating enzyme otubain-like</fullName>
    </alternativeName>
    <alternativeName>
        <fullName>Ubiquitin-specific-processing protease otubain-like</fullName>
    </alternativeName>
</protein>
<proteinExistence type="evidence at protein level"/>
<name>OTUBL_CAEEL</name>
<accession>Q9XVR6</accession>
<organism>
    <name type="scientific">Caenorhabditis elegans</name>
    <dbReference type="NCBI Taxonomy" id="6239"/>
    <lineage>
        <taxon>Eukaryota</taxon>
        <taxon>Metazoa</taxon>
        <taxon>Ecdysozoa</taxon>
        <taxon>Nematoda</taxon>
        <taxon>Chromadorea</taxon>
        <taxon>Rhabditida</taxon>
        <taxon>Rhabditina</taxon>
        <taxon>Rhabditomorpha</taxon>
        <taxon>Rhabditoidea</taxon>
        <taxon>Rhabditidae</taxon>
        <taxon>Peloderinae</taxon>
        <taxon>Caenorhabditis</taxon>
    </lineage>
</organism>
<keyword id="KW-0002">3D-structure</keyword>
<keyword id="KW-0378">Hydrolase</keyword>
<keyword id="KW-0645">Protease</keyword>
<keyword id="KW-1185">Reference proteome</keyword>
<keyword id="KW-0788">Thiol protease</keyword>
<keyword id="KW-0833">Ubl conjugation pathway</keyword>
<evidence type="ECO:0000250" key="1">
    <source>
        <dbReference type="UniProtKB" id="Q5VVQ6"/>
    </source>
</evidence>
<evidence type="ECO:0000250" key="2">
    <source>
        <dbReference type="UniProtKB" id="Q96DC9"/>
    </source>
</evidence>
<evidence type="ECO:0000250" key="3">
    <source>
        <dbReference type="UniProtKB" id="Q96FW1"/>
    </source>
</evidence>
<evidence type="ECO:0000255" key="4">
    <source>
        <dbReference type="PROSITE-ProRule" id="PRU00139"/>
    </source>
</evidence>
<evidence type="ECO:0000269" key="5">
    <source>
    </source>
</evidence>
<evidence type="ECO:0000305" key="6"/>
<evidence type="ECO:0007829" key="7">
    <source>
        <dbReference type="PDB" id="4DHI"/>
    </source>
</evidence>
<evidence type="ECO:0007829" key="8">
    <source>
        <dbReference type="PDB" id="4DHJ"/>
    </source>
</evidence>
<evidence type="ECO:0007829" key="9">
    <source>
        <dbReference type="PDB" id="4DHZ"/>
    </source>
</evidence>
<evidence type="ECO:0007829" key="10">
    <source>
        <dbReference type="PDB" id="4LDT"/>
    </source>
</evidence>